<proteinExistence type="inferred from homology"/>
<gene>
    <name evidence="1" type="primary">coaX</name>
    <name type="ordered locus">Swol_0109</name>
</gene>
<keyword id="KW-0067">ATP-binding</keyword>
<keyword id="KW-0173">Coenzyme A biosynthesis</keyword>
<keyword id="KW-0963">Cytoplasm</keyword>
<keyword id="KW-0418">Kinase</keyword>
<keyword id="KW-0479">Metal-binding</keyword>
<keyword id="KW-0547">Nucleotide-binding</keyword>
<keyword id="KW-0630">Potassium</keyword>
<keyword id="KW-1185">Reference proteome</keyword>
<keyword id="KW-0808">Transferase</keyword>
<comment type="function">
    <text evidence="1">Catalyzes the phosphorylation of pantothenate (Pan), the first step in CoA biosynthesis.</text>
</comment>
<comment type="catalytic activity">
    <reaction evidence="1">
        <text>(R)-pantothenate + ATP = (R)-4'-phosphopantothenate + ADP + H(+)</text>
        <dbReference type="Rhea" id="RHEA:16373"/>
        <dbReference type="ChEBI" id="CHEBI:10986"/>
        <dbReference type="ChEBI" id="CHEBI:15378"/>
        <dbReference type="ChEBI" id="CHEBI:29032"/>
        <dbReference type="ChEBI" id="CHEBI:30616"/>
        <dbReference type="ChEBI" id="CHEBI:456216"/>
        <dbReference type="EC" id="2.7.1.33"/>
    </reaction>
</comment>
<comment type="cofactor">
    <cofactor evidence="1">
        <name>NH4(+)</name>
        <dbReference type="ChEBI" id="CHEBI:28938"/>
    </cofactor>
    <cofactor evidence="1">
        <name>K(+)</name>
        <dbReference type="ChEBI" id="CHEBI:29103"/>
    </cofactor>
    <text evidence="1">A monovalent cation. Ammonium or potassium.</text>
</comment>
<comment type="pathway">
    <text evidence="1">Cofactor biosynthesis; coenzyme A biosynthesis; CoA from (R)-pantothenate: step 1/5.</text>
</comment>
<comment type="subunit">
    <text evidence="1">Homodimer.</text>
</comment>
<comment type="subcellular location">
    <subcellularLocation>
        <location evidence="1">Cytoplasm</location>
    </subcellularLocation>
</comment>
<comment type="similarity">
    <text evidence="1">Belongs to the type III pantothenate kinase family.</text>
</comment>
<name>COAX_SYNWW</name>
<dbReference type="EC" id="2.7.1.33" evidence="1"/>
<dbReference type="EMBL" id="CP000448">
    <property type="protein sequence ID" value="ABI67465.1"/>
    <property type="molecule type" value="Genomic_DNA"/>
</dbReference>
<dbReference type="RefSeq" id="WP_011639576.1">
    <property type="nucleotide sequence ID" value="NC_008346.1"/>
</dbReference>
<dbReference type="SMR" id="Q0B0N9"/>
<dbReference type="STRING" id="335541.Swol_0109"/>
<dbReference type="KEGG" id="swo:Swol_0109"/>
<dbReference type="eggNOG" id="COG1521">
    <property type="taxonomic scope" value="Bacteria"/>
</dbReference>
<dbReference type="HOGENOM" id="CLU_066627_1_0_9"/>
<dbReference type="OrthoDB" id="9804707at2"/>
<dbReference type="UniPathway" id="UPA00241">
    <property type="reaction ID" value="UER00352"/>
</dbReference>
<dbReference type="Proteomes" id="UP000001968">
    <property type="component" value="Chromosome"/>
</dbReference>
<dbReference type="GO" id="GO:0005737">
    <property type="term" value="C:cytoplasm"/>
    <property type="evidence" value="ECO:0007669"/>
    <property type="project" value="UniProtKB-SubCell"/>
</dbReference>
<dbReference type="GO" id="GO:0005524">
    <property type="term" value="F:ATP binding"/>
    <property type="evidence" value="ECO:0007669"/>
    <property type="project" value="UniProtKB-UniRule"/>
</dbReference>
<dbReference type="GO" id="GO:0046872">
    <property type="term" value="F:metal ion binding"/>
    <property type="evidence" value="ECO:0007669"/>
    <property type="project" value="UniProtKB-KW"/>
</dbReference>
<dbReference type="GO" id="GO:0004594">
    <property type="term" value="F:pantothenate kinase activity"/>
    <property type="evidence" value="ECO:0007669"/>
    <property type="project" value="UniProtKB-UniRule"/>
</dbReference>
<dbReference type="GO" id="GO:0015937">
    <property type="term" value="P:coenzyme A biosynthetic process"/>
    <property type="evidence" value="ECO:0007669"/>
    <property type="project" value="UniProtKB-UniRule"/>
</dbReference>
<dbReference type="CDD" id="cd24015">
    <property type="entry name" value="ASKHA_NBD_PanK-III"/>
    <property type="match status" value="1"/>
</dbReference>
<dbReference type="Gene3D" id="3.30.420.40">
    <property type="match status" value="2"/>
</dbReference>
<dbReference type="HAMAP" id="MF_01274">
    <property type="entry name" value="Pantothen_kinase_3"/>
    <property type="match status" value="1"/>
</dbReference>
<dbReference type="InterPro" id="IPR043129">
    <property type="entry name" value="ATPase_NBD"/>
</dbReference>
<dbReference type="InterPro" id="IPR004619">
    <property type="entry name" value="Type_III_PanK"/>
</dbReference>
<dbReference type="NCBIfam" id="TIGR00671">
    <property type="entry name" value="baf"/>
    <property type="match status" value="1"/>
</dbReference>
<dbReference type="NCBIfam" id="NF009847">
    <property type="entry name" value="PRK13318.1-5"/>
    <property type="match status" value="1"/>
</dbReference>
<dbReference type="NCBIfam" id="NF009848">
    <property type="entry name" value="PRK13318.1-6"/>
    <property type="match status" value="1"/>
</dbReference>
<dbReference type="NCBIfam" id="NF009855">
    <property type="entry name" value="PRK13321.1"/>
    <property type="match status" value="1"/>
</dbReference>
<dbReference type="PANTHER" id="PTHR34265">
    <property type="entry name" value="TYPE III PANTOTHENATE KINASE"/>
    <property type="match status" value="1"/>
</dbReference>
<dbReference type="PANTHER" id="PTHR34265:SF1">
    <property type="entry name" value="TYPE III PANTOTHENATE KINASE"/>
    <property type="match status" value="1"/>
</dbReference>
<dbReference type="Pfam" id="PF03309">
    <property type="entry name" value="Pan_kinase"/>
    <property type="match status" value="1"/>
</dbReference>
<dbReference type="SUPFAM" id="SSF53067">
    <property type="entry name" value="Actin-like ATPase domain"/>
    <property type="match status" value="2"/>
</dbReference>
<evidence type="ECO:0000255" key="1">
    <source>
        <dbReference type="HAMAP-Rule" id="MF_01274"/>
    </source>
</evidence>
<protein>
    <recommendedName>
        <fullName evidence="1">Type III pantothenate kinase</fullName>
        <ecNumber evidence="1">2.7.1.33</ecNumber>
    </recommendedName>
    <alternativeName>
        <fullName evidence="1">PanK-III</fullName>
    </alternativeName>
    <alternativeName>
        <fullName evidence="1">Pantothenic acid kinase</fullName>
    </alternativeName>
</protein>
<organism>
    <name type="scientific">Syntrophomonas wolfei subsp. wolfei (strain DSM 2245B / Goettingen)</name>
    <dbReference type="NCBI Taxonomy" id="335541"/>
    <lineage>
        <taxon>Bacteria</taxon>
        <taxon>Bacillati</taxon>
        <taxon>Bacillota</taxon>
        <taxon>Clostridia</taxon>
        <taxon>Eubacteriales</taxon>
        <taxon>Syntrophomonadaceae</taxon>
        <taxon>Syntrophomonas</taxon>
    </lineage>
</organism>
<reference key="1">
    <citation type="journal article" date="2010" name="Environ. Microbiol.">
        <title>The genome of Syntrophomonas wolfei: new insights into syntrophic metabolism and biohydrogen production.</title>
        <authorList>
            <person name="Sieber J.R."/>
            <person name="Sims D.R."/>
            <person name="Han C."/>
            <person name="Kim E."/>
            <person name="Lykidis A."/>
            <person name="Lapidus A.L."/>
            <person name="McDonnald E."/>
            <person name="Rohlin L."/>
            <person name="Culley D.E."/>
            <person name="Gunsalus R."/>
            <person name="McInerney M.J."/>
        </authorList>
    </citation>
    <scope>NUCLEOTIDE SEQUENCE [LARGE SCALE GENOMIC DNA]</scope>
    <source>
        <strain>DSM 2245B / Goettingen</strain>
    </source>
</reference>
<sequence length="255" mass="27967">MILVFDVGNTNTVIGVYDREKLLNHWRIRTNPQRTCDEYGILLRSLLENDKLNLKDIKSVVISSVVPTLMMELEWMSRKFFACRPLVIGPGVKSGLAIKYENPREVGADRVVNAVAAYDKYGGPLIIVDFGTATTFCVVSAKGEYLGGAIAPGIIISTEALVSKAAKLPRVELQRPRSLIGKNTVSSMQAGIMYGFVGQVEGIITRMKTEIETTPQVIATGGLAAVIARETDVIDKVDEFLTLDGLRLIYEMNRG</sequence>
<feature type="chain" id="PRO_0000267594" description="Type III pantothenate kinase">
    <location>
        <begin position="1"/>
        <end position="255"/>
    </location>
</feature>
<feature type="active site" description="Proton acceptor" evidence="1">
    <location>
        <position position="109"/>
    </location>
</feature>
<feature type="binding site" evidence="1">
    <location>
        <begin position="6"/>
        <end position="13"/>
    </location>
    <ligand>
        <name>ATP</name>
        <dbReference type="ChEBI" id="CHEBI:30616"/>
    </ligand>
</feature>
<feature type="binding site" evidence="1">
    <location>
        <position position="100"/>
    </location>
    <ligand>
        <name>substrate</name>
    </ligand>
</feature>
<feature type="binding site" evidence="1">
    <location>
        <begin position="107"/>
        <end position="110"/>
    </location>
    <ligand>
        <name>substrate</name>
    </ligand>
</feature>
<feature type="binding site" evidence="1">
    <location>
        <position position="129"/>
    </location>
    <ligand>
        <name>K(+)</name>
        <dbReference type="ChEBI" id="CHEBI:29103"/>
    </ligand>
</feature>
<feature type="binding site" evidence="1">
    <location>
        <position position="132"/>
    </location>
    <ligand>
        <name>ATP</name>
        <dbReference type="ChEBI" id="CHEBI:30616"/>
    </ligand>
</feature>
<feature type="binding site" evidence="1">
    <location>
        <position position="184"/>
    </location>
    <ligand>
        <name>substrate</name>
    </ligand>
</feature>
<accession>Q0B0N9</accession>